<sequence length="161" mass="18242">MNAYDVLKRHHTVLKGLGRKVGEAPVNSEERHVLFDEMLIELDIHFRIEDDLYYPALSAAGKPITGTHAEHRQVVDQLATLLRTPQRAPGYEEEWNVFRTVLEAHADVEERDMIPAPTPVHITDAELEELGDKMAARIEQLRGSPLYTLRTKGKADLLKAI</sequence>
<keyword id="KW-1185">Reference proteome</keyword>
<gene>
    <name type="ordered locus">Rv2633c</name>
    <name type="ORF">MTCY441.03c</name>
</gene>
<accession>P9WL59</accession>
<accession>L0TAG1</accession>
<accession>P65035</accession>
<accession>P71932</accession>
<dbReference type="EMBL" id="AL123456">
    <property type="protein sequence ID" value="CCP45431.1"/>
    <property type="molecule type" value="Genomic_DNA"/>
</dbReference>
<dbReference type="PIR" id="E70963">
    <property type="entry name" value="E70963"/>
</dbReference>
<dbReference type="RefSeq" id="NP_217149.1">
    <property type="nucleotide sequence ID" value="NC_000962.3"/>
</dbReference>
<dbReference type="RefSeq" id="WP_003413625.1">
    <property type="nucleotide sequence ID" value="NZ_NVQJ01000075.1"/>
</dbReference>
<dbReference type="SMR" id="P9WL59"/>
<dbReference type="STRING" id="83332.Rv2633c"/>
<dbReference type="PaxDb" id="83332-Rv2633c"/>
<dbReference type="DNASU" id="888597"/>
<dbReference type="GeneID" id="888597"/>
<dbReference type="KEGG" id="mtu:Rv2633c"/>
<dbReference type="KEGG" id="mtv:RVBD_2633c"/>
<dbReference type="TubercuList" id="Rv2633c"/>
<dbReference type="eggNOG" id="COG5592">
    <property type="taxonomic scope" value="Bacteria"/>
</dbReference>
<dbReference type="InParanoid" id="P9WL59"/>
<dbReference type="OrthoDB" id="9793637at2"/>
<dbReference type="Proteomes" id="UP000001584">
    <property type="component" value="Chromosome"/>
</dbReference>
<dbReference type="Gene3D" id="1.20.120.520">
    <property type="entry name" value="nmb1532 protein domain like"/>
    <property type="match status" value="1"/>
</dbReference>
<dbReference type="InterPro" id="IPR012312">
    <property type="entry name" value="Hemerythrin-like"/>
</dbReference>
<dbReference type="PANTHER" id="PTHR35585">
    <property type="entry name" value="HHE DOMAIN PROTEIN (AFU_ORTHOLOGUE AFUA_4G00730)"/>
    <property type="match status" value="1"/>
</dbReference>
<dbReference type="PANTHER" id="PTHR35585:SF1">
    <property type="entry name" value="HHE DOMAIN PROTEIN (AFU_ORTHOLOGUE AFUA_4G00730)"/>
    <property type="match status" value="1"/>
</dbReference>
<dbReference type="Pfam" id="PF01814">
    <property type="entry name" value="Hemerythrin"/>
    <property type="match status" value="1"/>
</dbReference>
<name>Y2633_MYCTU</name>
<feature type="chain" id="PRO_0000104074" description="Uncharacterized protein Rv2633c">
    <location>
        <begin position="1"/>
        <end position="161"/>
    </location>
</feature>
<organism>
    <name type="scientific">Mycobacterium tuberculosis (strain ATCC 25618 / H37Rv)</name>
    <dbReference type="NCBI Taxonomy" id="83332"/>
    <lineage>
        <taxon>Bacteria</taxon>
        <taxon>Bacillati</taxon>
        <taxon>Actinomycetota</taxon>
        <taxon>Actinomycetes</taxon>
        <taxon>Mycobacteriales</taxon>
        <taxon>Mycobacteriaceae</taxon>
        <taxon>Mycobacterium</taxon>
        <taxon>Mycobacterium tuberculosis complex</taxon>
    </lineage>
</organism>
<reference key="1">
    <citation type="journal article" date="1998" name="Nature">
        <title>Deciphering the biology of Mycobacterium tuberculosis from the complete genome sequence.</title>
        <authorList>
            <person name="Cole S.T."/>
            <person name="Brosch R."/>
            <person name="Parkhill J."/>
            <person name="Garnier T."/>
            <person name="Churcher C.M."/>
            <person name="Harris D.E."/>
            <person name="Gordon S.V."/>
            <person name="Eiglmeier K."/>
            <person name="Gas S."/>
            <person name="Barry C.E. III"/>
            <person name="Tekaia F."/>
            <person name="Badcock K."/>
            <person name="Basham D."/>
            <person name="Brown D."/>
            <person name="Chillingworth T."/>
            <person name="Connor R."/>
            <person name="Davies R.M."/>
            <person name="Devlin K."/>
            <person name="Feltwell T."/>
            <person name="Gentles S."/>
            <person name="Hamlin N."/>
            <person name="Holroyd S."/>
            <person name="Hornsby T."/>
            <person name="Jagels K."/>
            <person name="Krogh A."/>
            <person name="McLean J."/>
            <person name="Moule S."/>
            <person name="Murphy L.D."/>
            <person name="Oliver S."/>
            <person name="Osborne J."/>
            <person name="Quail M.A."/>
            <person name="Rajandream M.A."/>
            <person name="Rogers J."/>
            <person name="Rutter S."/>
            <person name="Seeger K."/>
            <person name="Skelton S."/>
            <person name="Squares S."/>
            <person name="Squares R."/>
            <person name="Sulston J.E."/>
            <person name="Taylor K."/>
            <person name="Whitehead S."/>
            <person name="Barrell B.G."/>
        </authorList>
    </citation>
    <scope>NUCLEOTIDE SEQUENCE [LARGE SCALE GENOMIC DNA]</scope>
    <source>
        <strain>ATCC 25618 / H37Rv</strain>
    </source>
</reference>
<reference key="2">
    <citation type="journal article" date="2011" name="Mol. Cell. Proteomics">
        <title>Proteogenomic analysis of Mycobacterium tuberculosis by high resolution mass spectrometry.</title>
        <authorList>
            <person name="Kelkar D.S."/>
            <person name="Kumar D."/>
            <person name="Kumar P."/>
            <person name="Balakrishnan L."/>
            <person name="Muthusamy B."/>
            <person name="Yadav A.K."/>
            <person name="Shrivastava P."/>
            <person name="Marimuthu A."/>
            <person name="Anand S."/>
            <person name="Sundaram H."/>
            <person name="Kingsbury R."/>
            <person name="Harsha H.C."/>
            <person name="Nair B."/>
            <person name="Prasad T.S."/>
            <person name="Chauhan D.S."/>
            <person name="Katoch K."/>
            <person name="Katoch V.M."/>
            <person name="Kumar P."/>
            <person name="Chaerkady R."/>
            <person name="Ramachandran S."/>
            <person name="Dash D."/>
            <person name="Pandey A."/>
        </authorList>
    </citation>
    <scope>IDENTIFICATION BY MASS SPECTROMETRY [LARGE SCALE ANALYSIS]</scope>
    <source>
        <strain>ATCC 25618 / H37Rv</strain>
    </source>
</reference>
<protein>
    <recommendedName>
        <fullName>Uncharacterized protein Rv2633c</fullName>
    </recommendedName>
</protein>
<proteinExistence type="evidence at protein level"/>